<dbReference type="EMBL" id="D90001">
    <property type="protein sequence ID" value="BAA14053.1"/>
    <property type="molecule type" value="Genomic_DNA"/>
</dbReference>
<dbReference type="EMBL" id="L10283">
    <property type="protein sequence ID" value="AAA03152.1"/>
    <property type="molecule type" value="Genomic_DNA"/>
</dbReference>
<dbReference type="EMBL" id="AF243438">
    <property type="protein sequence ID" value="AAG14238.1"/>
    <property type="molecule type" value="Genomic_DNA"/>
</dbReference>
<dbReference type="SMR" id="P22653"/>
<dbReference type="GlyCosmos" id="P22653">
    <property type="glycosylation" value="2 sites, No reported glycans"/>
</dbReference>
<dbReference type="KEGG" id="vg:4811519"/>
<dbReference type="Proteomes" id="UP000008072">
    <property type="component" value="Segment"/>
</dbReference>
<dbReference type="GO" id="GO:0016020">
    <property type="term" value="C:membrane"/>
    <property type="evidence" value="ECO:0007669"/>
    <property type="project" value="UniProtKB-KW"/>
</dbReference>
<dbReference type="GO" id="GO:0019031">
    <property type="term" value="C:viral envelope"/>
    <property type="evidence" value="ECO:0007669"/>
    <property type="project" value="UniProtKB-KW"/>
</dbReference>
<dbReference type="GO" id="GO:0055036">
    <property type="term" value="C:virion membrane"/>
    <property type="evidence" value="ECO:0007669"/>
    <property type="project" value="UniProtKB-SubCell"/>
</dbReference>
<dbReference type="InterPro" id="IPR016187">
    <property type="entry name" value="CTDL_fold"/>
</dbReference>
<dbReference type="Pfam" id="PF05473">
    <property type="entry name" value="UL45"/>
    <property type="match status" value="1"/>
</dbReference>
<dbReference type="SUPFAM" id="SSF56436">
    <property type="entry name" value="C-type lectin-like"/>
    <property type="match status" value="1"/>
</dbReference>
<keyword id="KW-0325">Glycoprotein</keyword>
<keyword id="KW-0472">Membrane</keyword>
<keyword id="KW-1185">Reference proteome</keyword>
<keyword id="KW-0735">Signal-anchor</keyword>
<keyword id="KW-0812">Transmembrane</keyword>
<keyword id="KW-1133">Transmembrane helix</keyword>
<keyword id="KW-0261">Viral envelope protein</keyword>
<keyword id="KW-0946">Virion</keyword>
<organism>
    <name type="scientific">Gallid herpesvirus 2 (strain Chicken/Md5/ATCC VR-987)</name>
    <name type="common">GaHV-2</name>
    <name type="synonym">Marek's disease herpesvirus type 1</name>
    <dbReference type="NCBI Taxonomy" id="10389"/>
    <lineage>
        <taxon>Viruses</taxon>
        <taxon>Duplodnaviria</taxon>
        <taxon>Heunggongvirae</taxon>
        <taxon>Peploviricota</taxon>
        <taxon>Herviviricetes</taxon>
        <taxon>Herpesvirales</taxon>
        <taxon>Orthoherpesviridae</taxon>
        <taxon>Alphaherpesvirinae</taxon>
        <taxon>Mardivirus</taxon>
        <taxon>Mardivirus gallidalpha2</taxon>
        <taxon>Gallid alphaherpesvirus 2</taxon>
    </lineage>
</organism>
<organismHost>
    <name type="scientific">Gallus gallus</name>
    <name type="common">Chicken</name>
    <dbReference type="NCBI Taxonomy" id="9031"/>
</organismHost>
<protein>
    <recommendedName>
        <fullName>Envelope protein UL45 homolog</fullName>
    </recommendedName>
</protein>
<reference key="1">
    <citation type="journal article" date="1989" name="Virus Genes">
        <title>Comparison of the sequence of the secretory glycoprotein A (gA) gene in Md5 and BC-1 strains of Marek's disease virus type 1.</title>
        <authorList>
            <person name="Ihara T."/>
            <person name="Kato A."/>
            <person name="Ueda S."/>
            <person name="Ishihama A."/>
            <person name="Hirai K."/>
        </authorList>
    </citation>
    <scope>NUCLEOTIDE SEQUENCE [GENOMIC DNA]</scope>
</reference>
<reference key="2">
    <citation type="journal article" date="1993" name="J. Gen. Virol.">
        <title>Nucleotide and predicted amino acid sequences of Marek's disease virus homologues of herpes simplex virus major tegument proteins.</title>
        <authorList>
            <person name="Yanagida N."/>
            <person name="Yoshida S."/>
            <person name="Nazerian K."/>
            <person name="Lee L.F."/>
        </authorList>
    </citation>
    <scope>NUCLEOTIDE SEQUENCE [GENOMIC DNA]</scope>
</reference>
<reference key="3">
    <citation type="journal article" date="2000" name="J. Virol.">
        <title>The genome of a very virulent Marek's disease virus.</title>
        <authorList>
            <person name="Tulman E.R."/>
            <person name="Afonso C.L."/>
            <person name="Lu Z."/>
            <person name="Zsak L."/>
            <person name="Rock D.L."/>
            <person name="Kutish G.F."/>
        </authorList>
    </citation>
    <scope>NUCLEOTIDE SEQUENCE [LARGE SCALE GENOMIC DNA]</scope>
</reference>
<feature type="chain" id="PRO_0000116091" description="Envelope protein UL45 homolog">
    <location>
        <begin position="1"/>
        <end position="211"/>
    </location>
</feature>
<feature type="topological domain" description="Intravirion" evidence="2">
    <location>
        <begin position="1"/>
        <end position="46"/>
    </location>
</feature>
<feature type="transmembrane region" description="Helical; Signal-anchor for type II membrane protein" evidence="2">
    <location>
        <begin position="47"/>
        <end position="67"/>
    </location>
</feature>
<feature type="topological domain" description="Virion surface" evidence="2">
    <location>
        <begin position="68"/>
        <end position="211"/>
    </location>
</feature>
<feature type="glycosylation site" description="N-linked (GlcNAc...) asparagine; by host" evidence="2">
    <location>
        <position position="96"/>
    </location>
</feature>
<feature type="glycosylation site" description="N-linked (GlcNAc...) asparagine; by host" evidence="2">
    <location>
        <position position="133"/>
    </location>
</feature>
<proteinExistence type="inferred from homology"/>
<gene>
    <name type="primary">UL45H</name>
</gene>
<name>EV45_GAHVM</name>
<sequence>MMSPTPEDDRDLVVVRGRLRMMDNGAEHDRERRSYTAWPHLCCGCTIGIILTMFVIATTLLLASLFAFSYMSLESGTCPKEWIGLGYSCMRVAGNNATELEALDMCAQHNSKLVDFTNAKTLVEAIVPFGSTNASFGNIFRLRDSRSTCILPTIGGPISVDCPRTCSVVCQRPRPLSTAASIIRDARIYLRLERRDYYEVYSSILSNAIMK</sequence>
<comment type="subcellular location">
    <subcellularLocation>
        <location evidence="1">Virion membrane</location>
        <topology evidence="1">Single-pass type II membrane protein</topology>
    </subcellularLocation>
</comment>
<comment type="similarity">
    <text evidence="3">Belongs to the herpesviridae HHV-1 UL45 family.</text>
</comment>
<accession>P22653</accession>
<accession>Q77MR7</accession>
<evidence type="ECO:0000250" key="1"/>
<evidence type="ECO:0000255" key="2"/>
<evidence type="ECO:0000305" key="3"/>